<name>KAT1_PETHY</name>
<dbReference type="EC" id="2.3.1.16"/>
<dbReference type="EMBL" id="FJ657663">
    <property type="protein sequence ID" value="ACV70032.1"/>
    <property type="molecule type" value="mRNA"/>
</dbReference>
<dbReference type="SMR" id="C8YNG6"/>
<dbReference type="UniPathway" id="UPA00199"/>
<dbReference type="GO" id="GO:0005777">
    <property type="term" value="C:peroxisome"/>
    <property type="evidence" value="ECO:0000314"/>
    <property type="project" value="UniProtKB"/>
</dbReference>
<dbReference type="GO" id="GO:0003988">
    <property type="term" value="F:acetyl-CoA C-acyltransferase activity"/>
    <property type="evidence" value="ECO:0007669"/>
    <property type="project" value="UniProtKB-EC"/>
</dbReference>
<dbReference type="GO" id="GO:0006635">
    <property type="term" value="P:fatty acid beta-oxidation"/>
    <property type="evidence" value="ECO:0007669"/>
    <property type="project" value="TreeGrafter"/>
</dbReference>
<dbReference type="GO" id="GO:0010597">
    <property type="term" value="P:green leaf volatile biosynthetic process"/>
    <property type="evidence" value="ECO:0000315"/>
    <property type="project" value="UniProtKB"/>
</dbReference>
<dbReference type="GO" id="GO:0010124">
    <property type="term" value="P:phenylacetate catabolic process"/>
    <property type="evidence" value="ECO:0007669"/>
    <property type="project" value="TreeGrafter"/>
</dbReference>
<dbReference type="CDD" id="cd00751">
    <property type="entry name" value="thiolase"/>
    <property type="match status" value="1"/>
</dbReference>
<dbReference type="FunFam" id="3.40.47.10:FF:000032">
    <property type="entry name" value="Peroxisomal 3-ketoacyl-CoA thiolase"/>
    <property type="match status" value="1"/>
</dbReference>
<dbReference type="Gene3D" id="3.40.47.10">
    <property type="match status" value="1"/>
</dbReference>
<dbReference type="InterPro" id="IPR002155">
    <property type="entry name" value="Thiolase"/>
</dbReference>
<dbReference type="InterPro" id="IPR016039">
    <property type="entry name" value="Thiolase-like"/>
</dbReference>
<dbReference type="InterPro" id="IPR050215">
    <property type="entry name" value="Thiolase-like_sf_Thiolase"/>
</dbReference>
<dbReference type="InterPro" id="IPR020615">
    <property type="entry name" value="Thiolase_acyl_enz_int_AS"/>
</dbReference>
<dbReference type="InterPro" id="IPR020610">
    <property type="entry name" value="Thiolase_AS"/>
</dbReference>
<dbReference type="InterPro" id="IPR020617">
    <property type="entry name" value="Thiolase_C"/>
</dbReference>
<dbReference type="InterPro" id="IPR020613">
    <property type="entry name" value="Thiolase_CS"/>
</dbReference>
<dbReference type="InterPro" id="IPR020616">
    <property type="entry name" value="Thiolase_N"/>
</dbReference>
<dbReference type="NCBIfam" id="TIGR01930">
    <property type="entry name" value="AcCoA-C-Actrans"/>
    <property type="match status" value="1"/>
</dbReference>
<dbReference type="PANTHER" id="PTHR43853:SF15">
    <property type="entry name" value="3-KETOACYL-COA THIOLASE 5, PEROXISOMAL"/>
    <property type="match status" value="1"/>
</dbReference>
<dbReference type="PANTHER" id="PTHR43853">
    <property type="entry name" value="3-KETOACYL-COA THIOLASE, PEROXISOMAL"/>
    <property type="match status" value="1"/>
</dbReference>
<dbReference type="Pfam" id="PF02803">
    <property type="entry name" value="Thiolase_C"/>
    <property type="match status" value="1"/>
</dbReference>
<dbReference type="Pfam" id="PF00108">
    <property type="entry name" value="Thiolase_N"/>
    <property type="match status" value="1"/>
</dbReference>
<dbReference type="SUPFAM" id="SSF53901">
    <property type="entry name" value="Thiolase-like"/>
    <property type="match status" value="2"/>
</dbReference>
<dbReference type="PROSITE" id="PS00098">
    <property type="entry name" value="THIOLASE_1"/>
    <property type="match status" value="1"/>
</dbReference>
<dbReference type="PROSITE" id="PS00737">
    <property type="entry name" value="THIOLASE_2"/>
    <property type="match status" value="1"/>
</dbReference>
<dbReference type="PROSITE" id="PS00099">
    <property type="entry name" value="THIOLASE_3"/>
    <property type="match status" value="1"/>
</dbReference>
<keyword id="KW-0012">Acyltransferase</keyword>
<keyword id="KW-0576">Peroxisome</keyword>
<keyword id="KW-0808">Transferase</keyword>
<keyword id="KW-0809">Transit peptide</keyword>
<gene>
    <name evidence="4" type="primary">KAT1</name>
</gene>
<protein>
    <recommendedName>
        <fullName evidence="4">3-ketoacyl CoA thiolase 1, peroxisomal</fullName>
        <shortName evidence="4">PhKAT1</shortName>
        <ecNumber>2.3.1.16</ecNumber>
    </recommendedName>
</protein>
<proteinExistence type="evidence at protein level"/>
<comment type="function">
    <text evidence="3">Component of the floral volatile benzenoid/phenylpropanoid (FVBP) biosynthetic pathway (PubMed:19659733). Thiolase that catalyzes the conversion of 3-oxo-3-phenylpropionyl-CoA (benzoylacetyl-CoA) to benzoyl-CoA (PubMed:19659733).</text>
</comment>
<comment type="catalytic activity">
    <reaction evidence="3">
        <text>an acyl-CoA + acetyl-CoA = a 3-oxoacyl-CoA + CoA</text>
        <dbReference type="Rhea" id="RHEA:21564"/>
        <dbReference type="ChEBI" id="CHEBI:57287"/>
        <dbReference type="ChEBI" id="CHEBI:57288"/>
        <dbReference type="ChEBI" id="CHEBI:58342"/>
        <dbReference type="ChEBI" id="CHEBI:90726"/>
        <dbReference type="EC" id="2.3.1.16"/>
    </reaction>
</comment>
<comment type="pathway">
    <text evidence="3">Aromatic compound metabolism.</text>
</comment>
<comment type="pathway">
    <text>Lipid metabolism; fatty acid metabolism.</text>
</comment>
<comment type="subunit">
    <text evidence="2">Homodimer.</text>
</comment>
<comment type="subcellular location">
    <subcellularLocation>
        <location evidence="3">Peroxisome</location>
    </subcellularLocation>
</comment>
<comment type="disruption phenotype">
    <text evidence="3">Strongly reduced benzoic acid (BA) levels and lower benzenoid formation.</text>
</comment>
<comment type="similarity">
    <text evidence="5">Belongs to the thiolase-like superfamily. Thiolase family.</text>
</comment>
<reference key="1">
    <citation type="journal article" date="2009" name="Plant J.">
        <title>A plant thiolase involved in benzoic acid biosynthesis and volatile benzenoid production.</title>
        <authorList>
            <person name="Van Moerkercke A."/>
            <person name="Schauvinhold I."/>
            <person name="Pichersky E."/>
            <person name="Haring M.A."/>
            <person name="Schuurink R.C."/>
        </authorList>
    </citation>
    <scope>NUCLEOTIDE SEQUENCE [MRNA]</scope>
    <scope>FUNCTION</scope>
    <scope>DISRUPTION PHENOTYPE</scope>
    <scope>CATALYTIC ACTIVITY</scope>
    <scope>PATHWAY</scope>
    <scope>SUBCELLULAR LOCATION</scope>
    <source>
        <strain>cv. Mitchell</strain>
    </source>
</reference>
<feature type="transit peptide" description="Peroxisome" evidence="5">
    <location>
        <begin position="1"/>
        <end position="34"/>
    </location>
</feature>
<feature type="chain" id="PRO_0000451518" description="3-ketoacyl CoA thiolase 1, peroxisomal">
    <location>
        <begin position="35"/>
        <end position="462"/>
    </location>
</feature>
<feature type="active site" description="Acyl-thioester intermediate" evidence="1">
    <location>
        <position position="138"/>
    </location>
</feature>
<feature type="active site" description="Proton acceptor" evidence="1">
    <location>
        <position position="393"/>
    </location>
</feature>
<feature type="active site" description="Proton acceptor" evidence="1">
    <location>
        <position position="425"/>
    </location>
</feature>
<feature type="binding site" evidence="1">
    <location>
        <position position="427"/>
    </location>
    <ligand>
        <name>substrate</name>
    </ligand>
</feature>
<accession>C8YNG6</accession>
<sequence length="462" mass="48866">MEKAIQRQRVLLEHLQPIRHHTHDHSSSLTTSICAAGDSAAYQRTAAFGDDVVIVAAYRTAICKSKRGGFKDTLSDDLLAPVLKAVIEKTNLDPKEVGDIVVGTVLAPGSIRAMECRMAAFYAGFPETVPIRTVNRQCSSGLQAVADVAASIKAGFYDIGIGAGLELMTVDNIGRVQQRNTKVDTFAQARDCLLPMGITSENVAQRFGVTRLEQDQAAVNSHQRAAAATASGKFKDEIIPVLTKIVDPQTGKEKPVVISVDDGIRPNTNLTSLGKLKPAFKNDGTTTAGNASQVSDGAAAVLLMKRSVAMKKGLPILGVFRSFAAVGVDPAVMGIGPAVAIPPAVKSAGLDLDDIDLYEINEAFASQFVYCQKKLNLDPEKVNVNGGAMALGHPLGATGARCVATLLHEMKRRGKDCRFGVISMCIGSGMGAAAVFERGDAVDDLCNARVSNNNSFLSKDAK</sequence>
<organism>
    <name type="scientific">Petunia hybrida</name>
    <name type="common">Petunia</name>
    <dbReference type="NCBI Taxonomy" id="4102"/>
    <lineage>
        <taxon>Eukaryota</taxon>
        <taxon>Viridiplantae</taxon>
        <taxon>Streptophyta</taxon>
        <taxon>Embryophyta</taxon>
        <taxon>Tracheophyta</taxon>
        <taxon>Spermatophyta</taxon>
        <taxon>Magnoliopsida</taxon>
        <taxon>eudicotyledons</taxon>
        <taxon>Gunneridae</taxon>
        <taxon>Pentapetalae</taxon>
        <taxon>asterids</taxon>
        <taxon>lamiids</taxon>
        <taxon>Solanales</taxon>
        <taxon>Solanaceae</taxon>
        <taxon>Petunioideae</taxon>
        <taxon>Petunia</taxon>
    </lineage>
</organism>
<evidence type="ECO:0000250" key="1">
    <source>
        <dbReference type="UniProtKB" id="I6XHI4"/>
    </source>
</evidence>
<evidence type="ECO:0000250" key="2">
    <source>
        <dbReference type="UniProtKB" id="Q56WD9"/>
    </source>
</evidence>
<evidence type="ECO:0000269" key="3">
    <source>
    </source>
</evidence>
<evidence type="ECO:0000303" key="4">
    <source>
    </source>
</evidence>
<evidence type="ECO:0000305" key="5"/>